<evidence type="ECO:0000255" key="1">
    <source>
        <dbReference type="HAMAP-Rule" id="MF_00020"/>
    </source>
</evidence>
<protein>
    <recommendedName>
        <fullName evidence="1">Acetate kinase</fullName>
        <ecNumber evidence="1">2.7.2.1</ecNumber>
    </recommendedName>
    <alternativeName>
        <fullName evidence="1">Acetokinase</fullName>
    </alternativeName>
</protein>
<sequence length="397" mass="43303">MSKIIAINAGSSSLKFQLFEMPSEKVLTKGLVERIGLEDSIFTITVNGEKQKEITNIPDHAVAVNMLLNKLTENGIVKSLDEISGIGHRVVHGGEKFADSVLITDQVLADIEDLSELAPLHNPANIVGIKAFQEVLPNVPAVAVFDTAFHQTMPESAYLYSLPYEYYEKYGIRKYGFHGTSHKYVTERAAELLGRPLESLRLLSCHLGNGASIAAVEGGKSIDTSMGFTPLAGVTMGTRSGNIDPALIPYIMEKTGQSVEEVVNVLNKKSGMLGLTGYSSDLRDIIAKEEEGDHRAKVALDVFVSRIHKYIGSYAARMKGVDAIIFTAGIGENSAIIRERVLEGLEYMGVYFDAKRNNVFGEEAFISFPHSPVKIIVIPTDEEVMIARDVVRLGNVG</sequence>
<proteinExistence type="inferred from homology"/>
<accession>A7GTR9</accession>
<feature type="chain" id="PRO_1000074181" description="Acetate kinase">
    <location>
        <begin position="1"/>
        <end position="397"/>
    </location>
</feature>
<feature type="active site" description="Proton donor/acceptor" evidence="1">
    <location>
        <position position="146"/>
    </location>
</feature>
<feature type="binding site" evidence="1">
    <location>
        <position position="8"/>
    </location>
    <ligand>
        <name>Mg(2+)</name>
        <dbReference type="ChEBI" id="CHEBI:18420"/>
    </ligand>
</feature>
<feature type="binding site" evidence="1">
    <location>
        <position position="15"/>
    </location>
    <ligand>
        <name>ATP</name>
        <dbReference type="ChEBI" id="CHEBI:30616"/>
    </ligand>
</feature>
<feature type="binding site" evidence="1">
    <location>
        <position position="89"/>
    </location>
    <ligand>
        <name>substrate</name>
    </ligand>
</feature>
<feature type="binding site" evidence="1">
    <location>
        <begin position="206"/>
        <end position="210"/>
    </location>
    <ligand>
        <name>ATP</name>
        <dbReference type="ChEBI" id="CHEBI:30616"/>
    </ligand>
</feature>
<feature type="binding site" evidence="1">
    <location>
        <begin position="281"/>
        <end position="283"/>
    </location>
    <ligand>
        <name>ATP</name>
        <dbReference type="ChEBI" id="CHEBI:30616"/>
    </ligand>
</feature>
<feature type="binding site" evidence="1">
    <location>
        <begin position="329"/>
        <end position="333"/>
    </location>
    <ligand>
        <name>ATP</name>
        <dbReference type="ChEBI" id="CHEBI:30616"/>
    </ligand>
</feature>
<feature type="binding site" evidence="1">
    <location>
        <position position="382"/>
    </location>
    <ligand>
        <name>Mg(2+)</name>
        <dbReference type="ChEBI" id="CHEBI:18420"/>
    </ligand>
</feature>
<feature type="site" description="Transition state stabilizer" evidence="1">
    <location>
        <position position="178"/>
    </location>
</feature>
<feature type="site" description="Transition state stabilizer" evidence="1">
    <location>
        <position position="239"/>
    </location>
</feature>
<keyword id="KW-0067">ATP-binding</keyword>
<keyword id="KW-0963">Cytoplasm</keyword>
<keyword id="KW-0418">Kinase</keyword>
<keyword id="KW-0460">Magnesium</keyword>
<keyword id="KW-0479">Metal-binding</keyword>
<keyword id="KW-0547">Nucleotide-binding</keyword>
<keyword id="KW-0808">Transferase</keyword>
<reference key="1">
    <citation type="journal article" date="2008" name="Chem. Biol. Interact.">
        <title>Extending the Bacillus cereus group genomics to putative food-borne pathogens of different toxicity.</title>
        <authorList>
            <person name="Lapidus A."/>
            <person name="Goltsman E."/>
            <person name="Auger S."/>
            <person name="Galleron N."/>
            <person name="Segurens B."/>
            <person name="Dossat C."/>
            <person name="Land M.L."/>
            <person name="Broussolle V."/>
            <person name="Brillard J."/>
            <person name="Guinebretiere M.-H."/>
            <person name="Sanchis V."/>
            <person name="Nguen-the C."/>
            <person name="Lereclus D."/>
            <person name="Richardson P."/>
            <person name="Wincker P."/>
            <person name="Weissenbach J."/>
            <person name="Ehrlich S.D."/>
            <person name="Sorokin A."/>
        </authorList>
    </citation>
    <scope>NUCLEOTIDE SEQUENCE [LARGE SCALE GENOMIC DNA]</scope>
    <source>
        <strain>DSM 22905 / CIP 110041 / 391-98 / NVH 391-98</strain>
    </source>
</reference>
<comment type="function">
    <text evidence="1">Catalyzes the formation of acetyl phosphate from acetate and ATP. Can also catalyze the reverse reaction.</text>
</comment>
<comment type="catalytic activity">
    <reaction evidence="1">
        <text>acetate + ATP = acetyl phosphate + ADP</text>
        <dbReference type="Rhea" id="RHEA:11352"/>
        <dbReference type="ChEBI" id="CHEBI:22191"/>
        <dbReference type="ChEBI" id="CHEBI:30089"/>
        <dbReference type="ChEBI" id="CHEBI:30616"/>
        <dbReference type="ChEBI" id="CHEBI:456216"/>
        <dbReference type="EC" id="2.7.2.1"/>
    </reaction>
</comment>
<comment type="cofactor">
    <cofactor evidence="1">
        <name>Mg(2+)</name>
        <dbReference type="ChEBI" id="CHEBI:18420"/>
    </cofactor>
    <cofactor evidence="1">
        <name>Mn(2+)</name>
        <dbReference type="ChEBI" id="CHEBI:29035"/>
    </cofactor>
    <text evidence="1">Mg(2+). Can also accept Mn(2+).</text>
</comment>
<comment type="pathway">
    <text evidence="1">Metabolic intermediate biosynthesis; acetyl-CoA biosynthesis; acetyl-CoA from acetate: step 1/2.</text>
</comment>
<comment type="subunit">
    <text evidence="1">Homodimer.</text>
</comment>
<comment type="subcellular location">
    <subcellularLocation>
        <location evidence="1">Cytoplasm</location>
    </subcellularLocation>
</comment>
<comment type="similarity">
    <text evidence="1">Belongs to the acetokinase family.</text>
</comment>
<name>ACKA_BACCN</name>
<gene>
    <name evidence="1" type="primary">ackA</name>
    <name type="ordered locus">Bcer98_3310</name>
</gene>
<organism>
    <name type="scientific">Bacillus cytotoxicus (strain DSM 22905 / CIP 110041 / 391-98 / NVH 391-98)</name>
    <dbReference type="NCBI Taxonomy" id="315749"/>
    <lineage>
        <taxon>Bacteria</taxon>
        <taxon>Bacillati</taxon>
        <taxon>Bacillota</taxon>
        <taxon>Bacilli</taxon>
        <taxon>Bacillales</taxon>
        <taxon>Bacillaceae</taxon>
        <taxon>Bacillus</taxon>
        <taxon>Bacillus cereus group</taxon>
    </lineage>
</organism>
<dbReference type="EC" id="2.7.2.1" evidence="1"/>
<dbReference type="EMBL" id="CP000764">
    <property type="protein sequence ID" value="ABS23527.1"/>
    <property type="molecule type" value="Genomic_DNA"/>
</dbReference>
<dbReference type="RefSeq" id="WP_012095768.1">
    <property type="nucleotide sequence ID" value="NC_009674.1"/>
</dbReference>
<dbReference type="SMR" id="A7GTR9"/>
<dbReference type="STRING" id="315749.Bcer98_3310"/>
<dbReference type="GeneID" id="33898555"/>
<dbReference type="KEGG" id="bcy:Bcer98_3310"/>
<dbReference type="eggNOG" id="COG0282">
    <property type="taxonomic scope" value="Bacteria"/>
</dbReference>
<dbReference type="HOGENOM" id="CLU_020352_0_1_9"/>
<dbReference type="OrthoDB" id="9802453at2"/>
<dbReference type="UniPathway" id="UPA00340">
    <property type="reaction ID" value="UER00458"/>
</dbReference>
<dbReference type="Proteomes" id="UP000002300">
    <property type="component" value="Chromosome"/>
</dbReference>
<dbReference type="GO" id="GO:0005737">
    <property type="term" value="C:cytoplasm"/>
    <property type="evidence" value="ECO:0007669"/>
    <property type="project" value="UniProtKB-SubCell"/>
</dbReference>
<dbReference type="GO" id="GO:0008776">
    <property type="term" value="F:acetate kinase activity"/>
    <property type="evidence" value="ECO:0007669"/>
    <property type="project" value="UniProtKB-UniRule"/>
</dbReference>
<dbReference type="GO" id="GO:0005524">
    <property type="term" value="F:ATP binding"/>
    <property type="evidence" value="ECO:0007669"/>
    <property type="project" value="UniProtKB-KW"/>
</dbReference>
<dbReference type="GO" id="GO:0000287">
    <property type="term" value="F:magnesium ion binding"/>
    <property type="evidence" value="ECO:0007669"/>
    <property type="project" value="UniProtKB-UniRule"/>
</dbReference>
<dbReference type="GO" id="GO:0006083">
    <property type="term" value="P:acetate metabolic process"/>
    <property type="evidence" value="ECO:0007669"/>
    <property type="project" value="TreeGrafter"/>
</dbReference>
<dbReference type="GO" id="GO:0006085">
    <property type="term" value="P:acetyl-CoA biosynthetic process"/>
    <property type="evidence" value="ECO:0007669"/>
    <property type="project" value="UniProtKB-UniRule"/>
</dbReference>
<dbReference type="CDD" id="cd24010">
    <property type="entry name" value="ASKHA_NBD_AcK_PK"/>
    <property type="match status" value="1"/>
</dbReference>
<dbReference type="Gene3D" id="3.30.420.40">
    <property type="match status" value="2"/>
</dbReference>
<dbReference type="HAMAP" id="MF_00020">
    <property type="entry name" value="Acetate_kinase"/>
    <property type="match status" value="1"/>
</dbReference>
<dbReference type="InterPro" id="IPR004372">
    <property type="entry name" value="Ac/propionate_kinase"/>
</dbReference>
<dbReference type="InterPro" id="IPR000890">
    <property type="entry name" value="Aliphatic_acid_kin_short-chain"/>
</dbReference>
<dbReference type="InterPro" id="IPR023865">
    <property type="entry name" value="Aliphatic_acid_kinase_CS"/>
</dbReference>
<dbReference type="InterPro" id="IPR043129">
    <property type="entry name" value="ATPase_NBD"/>
</dbReference>
<dbReference type="NCBIfam" id="TIGR00016">
    <property type="entry name" value="ackA"/>
    <property type="match status" value="1"/>
</dbReference>
<dbReference type="PANTHER" id="PTHR21060">
    <property type="entry name" value="ACETATE KINASE"/>
    <property type="match status" value="1"/>
</dbReference>
<dbReference type="PANTHER" id="PTHR21060:SF15">
    <property type="entry name" value="ACETATE KINASE-RELATED"/>
    <property type="match status" value="1"/>
</dbReference>
<dbReference type="Pfam" id="PF00871">
    <property type="entry name" value="Acetate_kinase"/>
    <property type="match status" value="1"/>
</dbReference>
<dbReference type="PIRSF" id="PIRSF000722">
    <property type="entry name" value="Acetate_prop_kin"/>
    <property type="match status" value="1"/>
</dbReference>
<dbReference type="PRINTS" id="PR00471">
    <property type="entry name" value="ACETATEKNASE"/>
</dbReference>
<dbReference type="SUPFAM" id="SSF53067">
    <property type="entry name" value="Actin-like ATPase domain"/>
    <property type="match status" value="2"/>
</dbReference>
<dbReference type="PROSITE" id="PS01075">
    <property type="entry name" value="ACETATE_KINASE_1"/>
    <property type="match status" value="1"/>
</dbReference>
<dbReference type="PROSITE" id="PS01076">
    <property type="entry name" value="ACETATE_KINASE_2"/>
    <property type="match status" value="1"/>
</dbReference>